<reference key="1">
    <citation type="submission" date="2006-01" db="EMBL/GenBank/DDBJ databases">
        <title>Complete sequence of Anaeromyxobacter dehalogenans 2CP-C.</title>
        <authorList>
            <person name="Copeland A."/>
            <person name="Lucas S."/>
            <person name="Lapidus A."/>
            <person name="Barry K."/>
            <person name="Detter J.C."/>
            <person name="Glavina T."/>
            <person name="Hammon N."/>
            <person name="Israni S."/>
            <person name="Pitluck S."/>
            <person name="Brettin T."/>
            <person name="Bruce D."/>
            <person name="Han C."/>
            <person name="Tapia R."/>
            <person name="Gilna P."/>
            <person name="Kiss H."/>
            <person name="Schmutz J."/>
            <person name="Larimer F."/>
            <person name="Land M."/>
            <person name="Kyrpides N."/>
            <person name="Anderson I."/>
            <person name="Sanford R.A."/>
            <person name="Ritalahti K.M."/>
            <person name="Thomas H.S."/>
            <person name="Kirby J.R."/>
            <person name="Zhulin I.B."/>
            <person name="Loeffler F.E."/>
            <person name="Richardson P."/>
        </authorList>
    </citation>
    <scope>NUCLEOTIDE SEQUENCE [LARGE SCALE GENOMIC DNA]</scope>
    <source>
        <strain>2CP-C</strain>
    </source>
</reference>
<sequence>MTVATAQARTAPQPLAYLKDLVLLSKPRLSGLVMITCAGGMWLAPGQIGAARAVLTVLATAVVVGAANALNCYLERDIDARMRRTRDRPLPAGRVDPFVALGLGIAAPAFAIPILSLAANGLTALLALVALLTYVLVYTPMKQRSATALFVGAVPGAIPPLMGWTSVTGGVDAGGLALFGLLFAWQLPHFLAISLYLREDYQRGGLRMFASVHGERATRLWMALTTILLLPASLALVPLGLAGTGYAITAAVLGLALSAYAISGIGREGGRWARTFFLGTLVHLTVLFVALFLSR</sequence>
<dbReference type="EC" id="2.5.1.141" evidence="1"/>
<dbReference type="EMBL" id="CP000251">
    <property type="protein sequence ID" value="ABC80676.1"/>
    <property type="status" value="ALT_INIT"/>
    <property type="molecule type" value="Genomic_DNA"/>
</dbReference>
<dbReference type="RefSeq" id="WP_198133812.1">
    <property type="nucleotide sequence ID" value="NC_007760.1"/>
</dbReference>
<dbReference type="SMR" id="Q2IPE5"/>
<dbReference type="STRING" id="290397.Adeh_0901"/>
<dbReference type="KEGG" id="ade:Adeh_0901"/>
<dbReference type="eggNOG" id="COG0109">
    <property type="taxonomic scope" value="Bacteria"/>
</dbReference>
<dbReference type="HOGENOM" id="CLU_029631_0_0_7"/>
<dbReference type="UniPathway" id="UPA00834">
    <property type="reaction ID" value="UER00712"/>
</dbReference>
<dbReference type="Proteomes" id="UP000001935">
    <property type="component" value="Chromosome"/>
</dbReference>
<dbReference type="GO" id="GO:0005886">
    <property type="term" value="C:plasma membrane"/>
    <property type="evidence" value="ECO:0007669"/>
    <property type="project" value="UniProtKB-SubCell"/>
</dbReference>
<dbReference type="GO" id="GO:0008495">
    <property type="term" value="F:protoheme IX farnesyltransferase activity"/>
    <property type="evidence" value="ECO:0007669"/>
    <property type="project" value="UniProtKB-UniRule"/>
</dbReference>
<dbReference type="GO" id="GO:0048034">
    <property type="term" value="P:heme O biosynthetic process"/>
    <property type="evidence" value="ECO:0007669"/>
    <property type="project" value="UniProtKB-UniRule"/>
</dbReference>
<dbReference type="CDD" id="cd13957">
    <property type="entry name" value="PT_UbiA_Cox10"/>
    <property type="match status" value="1"/>
</dbReference>
<dbReference type="Gene3D" id="1.10.357.140">
    <property type="entry name" value="UbiA prenyltransferase"/>
    <property type="match status" value="1"/>
</dbReference>
<dbReference type="HAMAP" id="MF_00154">
    <property type="entry name" value="CyoE_CtaB"/>
    <property type="match status" value="1"/>
</dbReference>
<dbReference type="InterPro" id="IPR006369">
    <property type="entry name" value="Protohaem_IX_farnesylTrfase"/>
</dbReference>
<dbReference type="InterPro" id="IPR000537">
    <property type="entry name" value="UbiA_prenyltransferase"/>
</dbReference>
<dbReference type="InterPro" id="IPR030470">
    <property type="entry name" value="UbiA_prenylTrfase_CS"/>
</dbReference>
<dbReference type="InterPro" id="IPR044878">
    <property type="entry name" value="UbiA_sf"/>
</dbReference>
<dbReference type="NCBIfam" id="TIGR01473">
    <property type="entry name" value="cyoE_ctaB"/>
    <property type="match status" value="1"/>
</dbReference>
<dbReference type="PANTHER" id="PTHR43448">
    <property type="entry name" value="PROTOHEME IX FARNESYLTRANSFERASE, MITOCHONDRIAL"/>
    <property type="match status" value="1"/>
</dbReference>
<dbReference type="PANTHER" id="PTHR43448:SF2">
    <property type="entry name" value="PROTOHEME IX FARNESYLTRANSFERASE, MITOCHONDRIAL"/>
    <property type="match status" value="1"/>
</dbReference>
<dbReference type="Pfam" id="PF01040">
    <property type="entry name" value="UbiA"/>
    <property type="match status" value="1"/>
</dbReference>
<dbReference type="PROSITE" id="PS00943">
    <property type="entry name" value="UBIA"/>
    <property type="match status" value="1"/>
</dbReference>
<accession>Q2IPE5</accession>
<gene>
    <name evidence="1" type="primary">ctaB</name>
    <name type="ordered locus">Adeh_0901</name>
</gene>
<feature type="chain" id="PRO_0000326991" description="Protoheme IX farnesyltransferase">
    <location>
        <begin position="1"/>
        <end position="295"/>
    </location>
</feature>
<feature type="transmembrane region" description="Helical" evidence="1">
    <location>
        <begin position="31"/>
        <end position="51"/>
    </location>
</feature>
<feature type="transmembrane region" description="Helical" evidence="1">
    <location>
        <begin position="54"/>
        <end position="74"/>
    </location>
</feature>
<feature type="transmembrane region" description="Helical" evidence="1">
    <location>
        <begin position="98"/>
        <end position="118"/>
    </location>
</feature>
<feature type="transmembrane region" description="Helical" evidence="1">
    <location>
        <begin position="121"/>
        <end position="141"/>
    </location>
</feature>
<feature type="transmembrane region" description="Helical" evidence="1">
    <location>
        <begin position="147"/>
        <end position="167"/>
    </location>
</feature>
<feature type="transmembrane region" description="Helical" evidence="1">
    <location>
        <begin position="173"/>
        <end position="193"/>
    </location>
</feature>
<feature type="transmembrane region" description="Helical" evidence="1">
    <location>
        <begin position="220"/>
        <end position="240"/>
    </location>
</feature>
<feature type="transmembrane region" description="Helical" evidence="1">
    <location>
        <begin position="245"/>
        <end position="265"/>
    </location>
</feature>
<feature type="transmembrane region" description="Helical" evidence="1">
    <location>
        <begin position="273"/>
        <end position="293"/>
    </location>
</feature>
<protein>
    <recommendedName>
        <fullName evidence="1">Protoheme IX farnesyltransferase</fullName>
        <ecNumber evidence="1">2.5.1.141</ecNumber>
    </recommendedName>
    <alternativeName>
        <fullName evidence="1">Heme B farnesyltransferase</fullName>
    </alternativeName>
    <alternativeName>
        <fullName evidence="1">Heme O synthase</fullName>
    </alternativeName>
</protein>
<proteinExistence type="inferred from homology"/>
<keyword id="KW-0997">Cell inner membrane</keyword>
<keyword id="KW-1003">Cell membrane</keyword>
<keyword id="KW-0350">Heme biosynthesis</keyword>
<keyword id="KW-0472">Membrane</keyword>
<keyword id="KW-1185">Reference proteome</keyword>
<keyword id="KW-0808">Transferase</keyword>
<keyword id="KW-0812">Transmembrane</keyword>
<keyword id="KW-1133">Transmembrane helix</keyword>
<organism>
    <name type="scientific">Anaeromyxobacter dehalogenans (strain 2CP-C)</name>
    <dbReference type="NCBI Taxonomy" id="290397"/>
    <lineage>
        <taxon>Bacteria</taxon>
        <taxon>Pseudomonadati</taxon>
        <taxon>Myxococcota</taxon>
        <taxon>Myxococcia</taxon>
        <taxon>Myxococcales</taxon>
        <taxon>Cystobacterineae</taxon>
        <taxon>Anaeromyxobacteraceae</taxon>
        <taxon>Anaeromyxobacter</taxon>
    </lineage>
</organism>
<comment type="function">
    <text evidence="1">Converts heme B (protoheme IX) to heme O by substitution of the vinyl group on carbon 2 of heme B porphyrin ring with a hydroxyethyl farnesyl side group.</text>
</comment>
<comment type="catalytic activity">
    <reaction evidence="1">
        <text>heme b + (2E,6E)-farnesyl diphosphate + H2O = Fe(II)-heme o + diphosphate</text>
        <dbReference type="Rhea" id="RHEA:28070"/>
        <dbReference type="ChEBI" id="CHEBI:15377"/>
        <dbReference type="ChEBI" id="CHEBI:33019"/>
        <dbReference type="ChEBI" id="CHEBI:60344"/>
        <dbReference type="ChEBI" id="CHEBI:60530"/>
        <dbReference type="ChEBI" id="CHEBI:175763"/>
        <dbReference type="EC" id="2.5.1.141"/>
    </reaction>
</comment>
<comment type="pathway">
    <text evidence="1">Porphyrin-containing compound metabolism; heme O biosynthesis; heme O from protoheme: step 1/1.</text>
</comment>
<comment type="subcellular location">
    <subcellularLocation>
        <location evidence="1">Cell inner membrane</location>
        <topology evidence="1">Multi-pass membrane protein</topology>
    </subcellularLocation>
</comment>
<comment type="miscellaneous">
    <text evidence="1">Carbon 2 of the heme B porphyrin ring is defined according to the Fischer nomenclature.</text>
</comment>
<comment type="similarity">
    <text evidence="1">Belongs to the UbiA prenyltransferase family. Protoheme IX farnesyltransferase subfamily.</text>
</comment>
<comment type="sequence caution" evidence="2">
    <conflict type="erroneous initiation">
        <sequence resource="EMBL-CDS" id="ABC80676"/>
    </conflict>
</comment>
<evidence type="ECO:0000255" key="1">
    <source>
        <dbReference type="HAMAP-Rule" id="MF_00154"/>
    </source>
</evidence>
<evidence type="ECO:0000305" key="2"/>
<name>COXX_ANADE</name>